<comment type="function">
    <text evidence="1">Seems to be required for the assembly of the photosystem I complex.</text>
</comment>
<comment type="subcellular location">
    <subcellularLocation>
        <location evidence="1">Plastid</location>
        <location evidence="1">Chloroplast thylakoid membrane</location>
        <topology evidence="1">Multi-pass membrane protein</topology>
    </subcellularLocation>
</comment>
<comment type="similarity">
    <text evidence="1">Belongs to the Ycf4 family.</text>
</comment>
<evidence type="ECO:0000255" key="1">
    <source>
        <dbReference type="HAMAP-Rule" id="MF_00437"/>
    </source>
</evidence>
<gene>
    <name evidence="1" type="primary">ycf4</name>
</gene>
<name>YCF4_AETCO</name>
<protein>
    <recommendedName>
        <fullName evidence="1">Photosystem I assembly protein Ycf4</fullName>
    </recommendedName>
</protein>
<dbReference type="EMBL" id="AP009366">
    <property type="protein sequence ID" value="BAF49781.1"/>
    <property type="molecule type" value="Genomic_DNA"/>
</dbReference>
<dbReference type="RefSeq" id="YP_001122957.1">
    <property type="nucleotide sequence ID" value="NC_009265.1"/>
</dbReference>
<dbReference type="GeneID" id="4968555"/>
<dbReference type="GO" id="GO:0009535">
    <property type="term" value="C:chloroplast thylakoid membrane"/>
    <property type="evidence" value="ECO:0007669"/>
    <property type="project" value="UniProtKB-SubCell"/>
</dbReference>
<dbReference type="GO" id="GO:0009522">
    <property type="term" value="C:photosystem I"/>
    <property type="evidence" value="ECO:0007669"/>
    <property type="project" value="InterPro"/>
</dbReference>
<dbReference type="GO" id="GO:0015979">
    <property type="term" value="P:photosynthesis"/>
    <property type="evidence" value="ECO:0007669"/>
    <property type="project" value="UniProtKB-UniRule"/>
</dbReference>
<dbReference type="HAMAP" id="MF_00437">
    <property type="entry name" value="Ycf4"/>
    <property type="match status" value="1"/>
</dbReference>
<dbReference type="InterPro" id="IPR003359">
    <property type="entry name" value="PSI_Ycf4_assembly"/>
</dbReference>
<dbReference type="PANTHER" id="PTHR33288">
    <property type="match status" value="1"/>
</dbReference>
<dbReference type="PANTHER" id="PTHR33288:SF4">
    <property type="entry name" value="PHOTOSYSTEM I ASSEMBLY PROTEIN YCF4"/>
    <property type="match status" value="1"/>
</dbReference>
<dbReference type="Pfam" id="PF02392">
    <property type="entry name" value="Ycf4"/>
    <property type="match status" value="1"/>
</dbReference>
<proteinExistence type="inferred from homology"/>
<keyword id="KW-0150">Chloroplast</keyword>
<keyword id="KW-0472">Membrane</keyword>
<keyword id="KW-0602">Photosynthesis</keyword>
<keyword id="KW-0934">Plastid</keyword>
<keyword id="KW-0793">Thylakoid</keyword>
<keyword id="KW-0812">Transmembrane</keyword>
<keyword id="KW-1133">Transmembrane helix</keyword>
<sequence>MSWRSESIWIELRTGSRKTSNFFWAFILFLGSLGFLLVGTSSYLGRNVISLFPSQQIIFFPQGIVMSFYGIAGLFISCYLWCTILWNVGSGYDLFDRKEGIVRIFRWGFPGKSRRIFLRFLMKDIQSIRIEVKEGISARRVLYMEIRGQGAIPLIRTDENFTTREIEQKAAELAYFLRVPIEVF</sequence>
<geneLocation type="chloroplast"/>
<reference key="1">
    <citation type="submission" date="2007-03" db="EMBL/GenBank/DDBJ databases">
        <title>Sequencing analysis of Aethionema coridifolium chloroplast DNA.</title>
        <authorList>
            <person name="Hosouchi T."/>
            <person name="Tsuruoka H."/>
            <person name="Kotani H."/>
        </authorList>
    </citation>
    <scope>NUCLEOTIDE SEQUENCE [LARGE SCALE GENOMIC DNA]</scope>
</reference>
<accession>A4QJC6</accession>
<feature type="chain" id="PRO_0000325992" description="Photosystem I assembly protein Ycf4">
    <location>
        <begin position="1"/>
        <end position="184"/>
    </location>
</feature>
<feature type="transmembrane region" description="Helical" evidence="1">
    <location>
        <begin position="22"/>
        <end position="42"/>
    </location>
</feature>
<feature type="transmembrane region" description="Helical" evidence="1">
    <location>
        <begin position="57"/>
        <end position="77"/>
    </location>
</feature>
<organism>
    <name type="scientific">Aethionema cordifolium</name>
    <name type="common">Lebanon stonecress</name>
    <dbReference type="NCBI Taxonomy" id="434059"/>
    <lineage>
        <taxon>Eukaryota</taxon>
        <taxon>Viridiplantae</taxon>
        <taxon>Streptophyta</taxon>
        <taxon>Embryophyta</taxon>
        <taxon>Tracheophyta</taxon>
        <taxon>Spermatophyta</taxon>
        <taxon>Magnoliopsida</taxon>
        <taxon>eudicotyledons</taxon>
        <taxon>Gunneridae</taxon>
        <taxon>Pentapetalae</taxon>
        <taxon>rosids</taxon>
        <taxon>malvids</taxon>
        <taxon>Brassicales</taxon>
        <taxon>Brassicaceae</taxon>
        <taxon>Aethionemeae</taxon>
        <taxon>Aethionema</taxon>
    </lineage>
</organism>